<reference key="1">
    <citation type="journal article" date="2000" name="Science">
        <title>The genome sequence of Drosophila melanogaster.</title>
        <authorList>
            <person name="Adams M.D."/>
            <person name="Celniker S.E."/>
            <person name="Holt R.A."/>
            <person name="Evans C.A."/>
            <person name="Gocayne J.D."/>
            <person name="Amanatides P.G."/>
            <person name="Scherer S.E."/>
            <person name="Li P.W."/>
            <person name="Hoskins R.A."/>
            <person name="Galle R.F."/>
            <person name="George R.A."/>
            <person name="Lewis S.E."/>
            <person name="Richards S."/>
            <person name="Ashburner M."/>
            <person name="Henderson S.N."/>
            <person name="Sutton G.G."/>
            <person name="Wortman J.R."/>
            <person name="Yandell M.D."/>
            <person name="Zhang Q."/>
            <person name="Chen L.X."/>
            <person name="Brandon R.C."/>
            <person name="Rogers Y.-H.C."/>
            <person name="Blazej R.G."/>
            <person name="Champe M."/>
            <person name="Pfeiffer B.D."/>
            <person name="Wan K.H."/>
            <person name="Doyle C."/>
            <person name="Baxter E.G."/>
            <person name="Helt G."/>
            <person name="Nelson C.R."/>
            <person name="Miklos G.L.G."/>
            <person name="Abril J.F."/>
            <person name="Agbayani A."/>
            <person name="An H.-J."/>
            <person name="Andrews-Pfannkoch C."/>
            <person name="Baldwin D."/>
            <person name="Ballew R.M."/>
            <person name="Basu A."/>
            <person name="Baxendale J."/>
            <person name="Bayraktaroglu L."/>
            <person name="Beasley E.M."/>
            <person name="Beeson K.Y."/>
            <person name="Benos P.V."/>
            <person name="Berman B.P."/>
            <person name="Bhandari D."/>
            <person name="Bolshakov S."/>
            <person name="Borkova D."/>
            <person name="Botchan M.R."/>
            <person name="Bouck J."/>
            <person name="Brokstein P."/>
            <person name="Brottier P."/>
            <person name="Burtis K.C."/>
            <person name="Busam D.A."/>
            <person name="Butler H."/>
            <person name="Cadieu E."/>
            <person name="Center A."/>
            <person name="Chandra I."/>
            <person name="Cherry J.M."/>
            <person name="Cawley S."/>
            <person name="Dahlke C."/>
            <person name="Davenport L.B."/>
            <person name="Davies P."/>
            <person name="de Pablos B."/>
            <person name="Delcher A."/>
            <person name="Deng Z."/>
            <person name="Mays A.D."/>
            <person name="Dew I."/>
            <person name="Dietz S.M."/>
            <person name="Dodson K."/>
            <person name="Doup L.E."/>
            <person name="Downes M."/>
            <person name="Dugan-Rocha S."/>
            <person name="Dunkov B.C."/>
            <person name="Dunn P."/>
            <person name="Durbin K.J."/>
            <person name="Evangelista C.C."/>
            <person name="Ferraz C."/>
            <person name="Ferriera S."/>
            <person name="Fleischmann W."/>
            <person name="Fosler C."/>
            <person name="Gabrielian A.E."/>
            <person name="Garg N.S."/>
            <person name="Gelbart W.M."/>
            <person name="Glasser K."/>
            <person name="Glodek A."/>
            <person name="Gong F."/>
            <person name="Gorrell J.H."/>
            <person name="Gu Z."/>
            <person name="Guan P."/>
            <person name="Harris M."/>
            <person name="Harris N.L."/>
            <person name="Harvey D.A."/>
            <person name="Heiman T.J."/>
            <person name="Hernandez J.R."/>
            <person name="Houck J."/>
            <person name="Hostin D."/>
            <person name="Houston K.A."/>
            <person name="Howland T.J."/>
            <person name="Wei M.-H."/>
            <person name="Ibegwam C."/>
            <person name="Jalali M."/>
            <person name="Kalush F."/>
            <person name="Karpen G.H."/>
            <person name="Ke Z."/>
            <person name="Kennison J.A."/>
            <person name="Ketchum K.A."/>
            <person name="Kimmel B.E."/>
            <person name="Kodira C.D."/>
            <person name="Kraft C.L."/>
            <person name="Kravitz S."/>
            <person name="Kulp D."/>
            <person name="Lai Z."/>
            <person name="Lasko P."/>
            <person name="Lei Y."/>
            <person name="Levitsky A.A."/>
            <person name="Li J.H."/>
            <person name="Li Z."/>
            <person name="Liang Y."/>
            <person name="Lin X."/>
            <person name="Liu X."/>
            <person name="Mattei B."/>
            <person name="McIntosh T.C."/>
            <person name="McLeod M.P."/>
            <person name="McPherson D."/>
            <person name="Merkulov G."/>
            <person name="Milshina N.V."/>
            <person name="Mobarry C."/>
            <person name="Morris J."/>
            <person name="Moshrefi A."/>
            <person name="Mount S.M."/>
            <person name="Moy M."/>
            <person name="Murphy B."/>
            <person name="Murphy L."/>
            <person name="Muzny D.M."/>
            <person name="Nelson D.L."/>
            <person name="Nelson D.R."/>
            <person name="Nelson K.A."/>
            <person name="Nixon K."/>
            <person name="Nusskern D.R."/>
            <person name="Pacleb J.M."/>
            <person name="Palazzolo M."/>
            <person name="Pittman G.S."/>
            <person name="Pan S."/>
            <person name="Pollard J."/>
            <person name="Puri V."/>
            <person name="Reese M.G."/>
            <person name="Reinert K."/>
            <person name="Remington K."/>
            <person name="Saunders R.D.C."/>
            <person name="Scheeler F."/>
            <person name="Shen H."/>
            <person name="Shue B.C."/>
            <person name="Siden-Kiamos I."/>
            <person name="Simpson M."/>
            <person name="Skupski M.P."/>
            <person name="Smith T.J."/>
            <person name="Spier E."/>
            <person name="Spradling A.C."/>
            <person name="Stapleton M."/>
            <person name="Strong R."/>
            <person name="Sun E."/>
            <person name="Svirskas R."/>
            <person name="Tector C."/>
            <person name="Turner R."/>
            <person name="Venter E."/>
            <person name="Wang A.H."/>
            <person name="Wang X."/>
            <person name="Wang Z.-Y."/>
            <person name="Wassarman D.A."/>
            <person name="Weinstock G.M."/>
            <person name="Weissenbach J."/>
            <person name="Williams S.M."/>
            <person name="Woodage T."/>
            <person name="Worley K.C."/>
            <person name="Wu D."/>
            <person name="Yang S."/>
            <person name="Yao Q.A."/>
            <person name="Ye J."/>
            <person name="Yeh R.-F."/>
            <person name="Zaveri J.S."/>
            <person name="Zhan M."/>
            <person name="Zhang G."/>
            <person name="Zhao Q."/>
            <person name="Zheng L."/>
            <person name="Zheng X.H."/>
            <person name="Zhong F.N."/>
            <person name="Zhong W."/>
            <person name="Zhou X."/>
            <person name="Zhu S.C."/>
            <person name="Zhu X."/>
            <person name="Smith H.O."/>
            <person name="Gibbs R.A."/>
            <person name="Myers E.W."/>
            <person name="Rubin G.M."/>
            <person name="Venter J.C."/>
        </authorList>
    </citation>
    <scope>NUCLEOTIDE SEQUENCE [LARGE SCALE GENOMIC DNA]</scope>
    <source>
        <strain>Berkeley</strain>
    </source>
</reference>
<reference key="2">
    <citation type="journal article" date="2002" name="Genome Biol.">
        <title>Annotation of the Drosophila melanogaster euchromatic genome: a systematic review.</title>
        <authorList>
            <person name="Misra S."/>
            <person name="Crosby M.A."/>
            <person name="Mungall C.J."/>
            <person name="Matthews B.B."/>
            <person name="Campbell K.S."/>
            <person name="Hradecky P."/>
            <person name="Huang Y."/>
            <person name="Kaminker J.S."/>
            <person name="Millburn G.H."/>
            <person name="Prochnik S.E."/>
            <person name="Smith C.D."/>
            <person name="Tupy J.L."/>
            <person name="Whitfield E.J."/>
            <person name="Bayraktaroglu L."/>
            <person name="Berman B.P."/>
            <person name="Bettencourt B.R."/>
            <person name="Celniker S.E."/>
            <person name="de Grey A.D.N.J."/>
            <person name="Drysdale R.A."/>
            <person name="Harris N.L."/>
            <person name="Richter J."/>
            <person name="Russo S."/>
            <person name="Schroeder A.J."/>
            <person name="Shu S.Q."/>
            <person name="Stapleton M."/>
            <person name="Yamada C."/>
            <person name="Ashburner M."/>
            <person name="Gelbart W.M."/>
            <person name="Rubin G.M."/>
            <person name="Lewis S.E."/>
        </authorList>
    </citation>
    <scope>GENOME REANNOTATION</scope>
    <source>
        <strain>Berkeley</strain>
    </source>
</reference>
<reference key="3">
    <citation type="journal article" date="2002" name="Genome Biol.">
        <title>A Drosophila full-length cDNA resource.</title>
        <authorList>
            <person name="Stapleton M."/>
            <person name="Carlson J.W."/>
            <person name="Brokstein P."/>
            <person name="Yu C."/>
            <person name="Champe M."/>
            <person name="George R.A."/>
            <person name="Guarin H."/>
            <person name="Kronmiller B."/>
            <person name="Pacleb J.M."/>
            <person name="Park S."/>
            <person name="Wan K.H."/>
            <person name="Rubin G.M."/>
            <person name="Celniker S.E."/>
        </authorList>
    </citation>
    <scope>NUCLEOTIDE SEQUENCE [LARGE SCALE MRNA]</scope>
    <source>
        <strain>Berkeley</strain>
        <tissue>Embryo</tissue>
    </source>
</reference>
<reference key="4">
    <citation type="journal article" date="1995" name="Eur. J. Cell Biol.">
        <title>Drosophila gp210, an invertebrate nuclear pore complex glycoprotein.</title>
        <authorList>
            <person name="Berrios M."/>
            <person name="Meller V.H."/>
            <person name="McConnell M."/>
            <person name="Fisher P.A."/>
        </authorList>
    </citation>
    <scope>SUBCELLULAR LOCATION</scope>
    <scope>TISSUE SPECIFICITY</scope>
</reference>
<reference key="5">
    <citation type="journal article" date="2006" name="Mol. Cell">
        <title>Nuclear pore components are involved in the transcriptional regulation of dosage compensation in Drosophila.</title>
        <authorList>
            <person name="Mendjan S."/>
            <person name="Taipale M."/>
            <person name="Kind J."/>
            <person name="Holz H."/>
            <person name="Gebhardt P."/>
            <person name="Schelder M."/>
            <person name="Vermeulen M."/>
            <person name="Buscaino A."/>
            <person name="Duncan K."/>
            <person name="Mueller J."/>
            <person name="Wilm M."/>
            <person name="Stunnenberg H.G."/>
            <person name="Saumweber H."/>
            <person name="Akhtar A."/>
        </authorList>
    </citation>
    <scope>FUNCTION</scope>
    <scope>ASSOCIATION WITH THE MSL COMPLEX</scope>
    <scope>SUBCELLULAR LOCATION</scope>
    <scope>IDENTIFICATION BY MASS SPECTROMETRY</scope>
</reference>
<reference key="6">
    <citation type="journal article" date="2007" name="J. Cell Biol.">
        <title>Distinct functions of the Drosophila Nup153 and Nup214 FG domains in nuclear protein transport.</title>
        <authorList>
            <person name="Sabri N."/>
            <person name="Roth P."/>
            <person name="Xylourgidis N."/>
            <person name="Sadeghifar F."/>
            <person name="Adler J."/>
            <person name="Samakovlis C."/>
        </authorList>
    </citation>
    <scope>FUNCTION IN PROTEIN IMPORT</scope>
    <scope>SUBUNIT</scope>
    <scope>SUBCELLULAR LOCATION</scope>
</reference>
<reference key="7">
    <citation type="journal article" date="2008" name="Mol. Biol. Cell">
        <title>In vivo dynamics of Drosophila nuclear envelope components.</title>
        <authorList>
            <person name="Katsani K.R."/>
            <person name="Karess R.E."/>
            <person name="Dostatni N."/>
            <person name="Doye V."/>
        </authorList>
    </citation>
    <scope>SUBCELLULAR LOCATION</scope>
    <scope>DEVELOPMENTAL STAGE</scope>
</reference>
<reference key="8">
    <citation type="journal article" date="2010" name="PLoS Genet.">
        <title>Nuclear pore proteins nup153 and megator define transcriptionally active regions in the Drosophila genome.</title>
        <authorList>
            <person name="Vaquerizas J.M."/>
            <person name="Suyama R."/>
            <person name="Kind J."/>
            <person name="Miura K."/>
            <person name="Luscombe N.M."/>
            <person name="Akhtar A."/>
        </authorList>
    </citation>
    <scope>FUNCTION</scope>
    <scope>SUBCELLULAR LOCATION</scope>
</reference>
<reference key="9">
    <citation type="journal article" date="2010" name="Mol. Cell. Biol.">
        <title>Specific nucleoporin requirement for Smad nuclear translocation.</title>
        <authorList>
            <person name="Chen X."/>
            <person name="Xu L."/>
        </authorList>
    </citation>
    <scope>FUNCTION</scope>
</reference>
<reference key="10">
    <citation type="journal article" date="2015" name="Nat. Cell Biol.">
        <title>Heterochromatic breaks move to the nuclear periphery to continue recombinational repair.</title>
        <authorList>
            <person name="Ryu T."/>
            <person name="Spatola B."/>
            <person name="Delabaere L."/>
            <person name="Bowlin K."/>
            <person name="Hopp H."/>
            <person name="Kunitake R."/>
            <person name="Karpen G.H."/>
            <person name="Chiolo I."/>
        </authorList>
    </citation>
    <scope>FUNCTION</scope>
</reference>
<proteinExistence type="evidence at protein level"/>
<keyword id="KW-0156">Chromatin regulator</keyword>
<keyword id="KW-0158">Chromosome</keyword>
<keyword id="KW-0963">Cytoplasm</keyword>
<keyword id="KW-0206">Cytoskeleton</keyword>
<keyword id="KW-0227">DNA damage</keyword>
<keyword id="KW-0238">DNA-binding</keyword>
<keyword id="KW-0472">Membrane</keyword>
<keyword id="KW-0479">Metal-binding</keyword>
<keyword id="KW-0509">mRNA transport</keyword>
<keyword id="KW-0906">Nuclear pore complex</keyword>
<keyword id="KW-0539">Nucleus</keyword>
<keyword id="KW-0653">Protein transport</keyword>
<keyword id="KW-1185">Reference proteome</keyword>
<keyword id="KW-0677">Repeat</keyword>
<keyword id="KW-0804">Transcription</keyword>
<keyword id="KW-0805">Transcription regulation</keyword>
<keyword id="KW-0811">Translocation</keyword>
<keyword id="KW-0813">Transport</keyword>
<keyword id="KW-0862">Zinc</keyword>
<keyword id="KW-0863">Zinc-finger</keyword>
<accession>Q9VXE6</accession>
<accession>Q1LZ48</accession>
<dbReference type="EMBL" id="AE014298">
    <property type="protein sequence ID" value="AAF48628.4"/>
    <property type="molecule type" value="Genomic_DNA"/>
</dbReference>
<dbReference type="EMBL" id="AE014298">
    <property type="protein sequence ID" value="ACL82938.1"/>
    <property type="molecule type" value="Genomic_DNA"/>
</dbReference>
<dbReference type="EMBL" id="BT025178">
    <property type="protein sequence ID" value="ABE98144.1"/>
    <property type="molecule type" value="mRNA"/>
</dbReference>
<dbReference type="RefSeq" id="NP_001138206.1">
    <property type="nucleotide sequence ID" value="NM_001144734.2"/>
</dbReference>
<dbReference type="RefSeq" id="NP_573136.3">
    <property type="nucleotide sequence ID" value="NM_132908.5"/>
</dbReference>
<dbReference type="SMR" id="Q9VXE6"/>
<dbReference type="BioGRID" id="58967">
    <property type="interactions" value="19"/>
</dbReference>
<dbReference type="ComplexPortal" id="CPX-2568">
    <property type="entry name" value="Nuclear pore complex"/>
</dbReference>
<dbReference type="FunCoup" id="Q9VXE6">
    <property type="interactions" value="549"/>
</dbReference>
<dbReference type="IntAct" id="Q9VXE6">
    <property type="interactions" value="12"/>
</dbReference>
<dbReference type="MINT" id="Q9VXE6"/>
<dbReference type="STRING" id="7227.FBpp0309144"/>
<dbReference type="GlyGen" id="Q9VXE6">
    <property type="glycosylation" value="16 sites, 1 O-linked glycan (13 sites)"/>
</dbReference>
<dbReference type="PaxDb" id="7227-FBpp0112385"/>
<dbReference type="DNASU" id="32630"/>
<dbReference type="EnsemblMetazoa" id="FBtr0074284">
    <property type="protein sequence ID" value="FBpp0074059"/>
    <property type="gene ID" value="FBgn0061200"/>
</dbReference>
<dbReference type="EnsemblMetazoa" id="FBtr0299587">
    <property type="protein sequence ID" value="FBpp0288862"/>
    <property type="gene ID" value="FBgn0061200"/>
</dbReference>
<dbReference type="GeneID" id="32630"/>
<dbReference type="KEGG" id="dme:Dmel_CG4453"/>
<dbReference type="UCSC" id="CG4453-RA">
    <property type="organism name" value="d. melanogaster"/>
</dbReference>
<dbReference type="AGR" id="FB:FBgn0061200"/>
<dbReference type="CTD" id="9972"/>
<dbReference type="FlyBase" id="FBgn0061200">
    <property type="gene designation" value="Nup153"/>
</dbReference>
<dbReference type="VEuPathDB" id="VectorBase:FBgn0061200"/>
<dbReference type="eggNOG" id="KOG4719">
    <property type="taxonomic scope" value="Eukaryota"/>
</dbReference>
<dbReference type="GeneTree" id="ENSGT00940000153253"/>
<dbReference type="HOGENOM" id="CLU_002102_0_0_1"/>
<dbReference type="InParanoid" id="Q9VXE6"/>
<dbReference type="OrthoDB" id="79830at2759"/>
<dbReference type="Reactome" id="R-DME-159227">
    <property type="pathway name" value="Transport of the SLBP independent Mature mRNA"/>
</dbReference>
<dbReference type="Reactome" id="R-DME-159230">
    <property type="pathway name" value="Transport of the SLBP Dependant Mature mRNA"/>
</dbReference>
<dbReference type="Reactome" id="R-DME-159231">
    <property type="pathway name" value="Transport of Mature mRNA Derived from an Intronless Transcript"/>
</dbReference>
<dbReference type="Reactome" id="R-DME-159236">
    <property type="pathway name" value="Transport of Mature mRNA derived from an Intron-Containing Transcript"/>
</dbReference>
<dbReference type="Reactome" id="R-DME-3108214">
    <property type="pathway name" value="SUMOylation of DNA damage response and repair proteins"/>
</dbReference>
<dbReference type="Reactome" id="R-DME-3301854">
    <property type="pathway name" value="Nuclear Pore Complex (NPC) Disassembly"/>
</dbReference>
<dbReference type="Reactome" id="R-DME-4085377">
    <property type="pathway name" value="SUMOylation of SUMOylation proteins"/>
</dbReference>
<dbReference type="Reactome" id="R-DME-4551638">
    <property type="pathway name" value="SUMOylation of chromatin organization proteins"/>
</dbReference>
<dbReference type="Reactome" id="R-DME-4615885">
    <property type="pathway name" value="SUMOylation of DNA replication proteins"/>
</dbReference>
<dbReference type="Reactome" id="R-DME-5578749">
    <property type="pathway name" value="Transcriptional regulation by small RNAs"/>
</dbReference>
<dbReference type="SignaLink" id="Q9VXE6"/>
<dbReference type="BioGRID-ORCS" id="32630">
    <property type="hits" value="0 hits in 1 CRISPR screen"/>
</dbReference>
<dbReference type="GenomeRNAi" id="32630"/>
<dbReference type="PRO" id="PR:Q9VXE6"/>
<dbReference type="Proteomes" id="UP000000803">
    <property type="component" value="Chromosome X"/>
</dbReference>
<dbReference type="Bgee" id="FBgn0061200">
    <property type="expression patterns" value="Expressed in adult Malpighian tubule principal cell of lower ureter in Malpighian tubule and 268 other cell types or tissues"/>
</dbReference>
<dbReference type="ExpressionAtlas" id="Q9VXE6">
    <property type="expression patterns" value="baseline and differential"/>
</dbReference>
<dbReference type="GO" id="GO:0005737">
    <property type="term" value="C:cytoplasm"/>
    <property type="evidence" value="ECO:0007669"/>
    <property type="project" value="UniProtKB-KW"/>
</dbReference>
<dbReference type="GO" id="GO:0000791">
    <property type="term" value="C:euchromatin"/>
    <property type="evidence" value="ECO:0000314"/>
    <property type="project" value="UniProtKB"/>
</dbReference>
<dbReference type="GO" id="GO:0005635">
    <property type="term" value="C:nuclear envelope"/>
    <property type="evidence" value="ECO:0000314"/>
    <property type="project" value="FlyBase"/>
</dbReference>
<dbReference type="GO" id="GO:0031965">
    <property type="term" value="C:nuclear membrane"/>
    <property type="evidence" value="ECO:0007669"/>
    <property type="project" value="UniProtKB-SubCell"/>
</dbReference>
<dbReference type="GO" id="GO:0034399">
    <property type="term" value="C:nuclear periphery"/>
    <property type="evidence" value="ECO:0000314"/>
    <property type="project" value="UniProtKB"/>
</dbReference>
<dbReference type="GO" id="GO:0005643">
    <property type="term" value="C:nuclear pore"/>
    <property type="evidence" value="ECO:0000318"/>
    <property type="project" value="GO_Central"/>
</dbReference>
<dbReference type="GO" id="GO:0044613">
    <property type="term" value="C:nuclear pore central transport channel"/>
    <property type="evidence" value="ECO:0000315"/>
    <property type="project" value="FlyBase"/>
</dbReference>
<dbReference type="GO" id="GO:0005634">
    <property type="term" value="C:nucleus"/>
    <property type="evidence" value="ECO:0000314"/>
    <property type="project" value="UniProtKB"/>
</dbReference>
<dbReference type="GO" id="GO:0005819">
    <property type="term" value="C:spindle"/>
    <property type="evidence" value="ECO:0007669"/>
    <property type="project" value="UniProtKB-SubCell"/>
</dbReference>
<dbReference type="GO" id="GO:0031490">
    <property type="term" value="F:chromatin DNA binding"/>
    <property type="evidence" value="ECO:0000314"/>
    <property type="project" value="UniProtKB"/>
</dbReference>
<dbReference type="GO" id="GO:0008139">
    <property type="term" value="F:nuclear localization sequence binding"/>
    <property type="evidence" value="ECO:0000318"/>
    <property type="project" value="GO_Central"/>
</dbReference>
<dbReference type="GO" id="GO:0017056">
    <property type="term" value="F:structural constituent of nuclear pore"/>
    <property type="evidence" value="ECO:0000315"/>
    <property type="project" value="FlyBase"/>
</dbReference>
<dbReference type="GO" id="GO:0008270">
    <property type="term" value="F:zinc ion binding"/>
    <property type="evidence" value="ECO:0007669"/>
    <property type="project" value="UniProtKB-KW"/>
</dbReference>
<dbReference type="GO" id="GO:0006325">
    <property type="term" value="P:chromatin organization"/>
    <property type="evidence" value="ECO:0000315"/>
    <property type="project" value="FlyBase"/>
</dbReference>
<dbReference type="GO" id="GO:0006338">
    <property type="term" value="P:chromatin remodeling"/>
    <property type="evidence" value="ECO:0000315"/>
    <property type="project" value="UniProtKB"/>
</dbReference>
<dbReference type="GO" id="GO:0006974">
    <property type="term" value="P:DNA damage response"/>
    <property type="evidence" value="ECO:0007669"/>
    <property type="project" value="UniProtKB-KW"/>
</dbReference>
<dbReference type="GO" id="GO:0051028">
    <property type="term" value="P:mRNA transport"/>
    <property type="evidence" value="ECO:0007669"/>
    <property type="project" value="UniProtKB-KW"/>
</dbReference>
<dbReference type="GO" id="GO:0006607">
    <property type="term" value="P:NLS-bearing protein import into nucleus"/>
    <property type="evidence" value="ECO:0000315"/>
    <property type="project" value="FlyBase"/>
</dbReference>
<dbReference type="GO" id="GO:0006999">
    <property type="term" value="P:nuclear pore organization"/>
    <property type="evidence" value="ECO:0000315"/>
    <property type="project" value="FlyBase"/>
</dbReference>
<dbReference type="GO" id="GO:0045944">
    <property type="term" value="P:positive regulation of transcription by RNA polymerase II"/>
    <property type="evidence" value="ECO:0000315"/>
    <property type="project" value="UniProtKB"/>
</dbReference>
<dbReference type="GO" id="GO:0006606">
    <property type="term" value="P:protein import into nucleus"/>
    <property type="evidence" value="ECO:0000315"/>
    <property type="project" value="FlyBase"/>
</dbReference>
<dbReference type="GO" id="GO:0006355">
    <property type="term" value="P:regulation of DNA-templated transcription"/>
    <property type="evidence" value="ECO:0000315"/>
    <property type="project" value="UniProtKB"/>
</dbReference>
<dbReference type="GO" id="GO:0006405">
    <property type="term" value="P:RNA export from nucleus"/>
    <property type="evidence" value="ECO:0000318"/>
    <property type="project" value="GO_Central"/>
</dbReference>
<dbReference type="GO" id="GO:0007549">
    <property type="term" value="P:sex-chromosome dosage compensation"/>
    <property type="evidence" value="ECO:0000315"/>
    <property type="project" value="UniProtKB"/>
</dbReference>
<dbReference type="FunFam" id="4.10.1060.10:FF:000001">
    <property type="entry name" value="Nuclear pore complex protein Nup153"/>
    <property type="match status" value="3"/>
</dbReference>
<dbReference type="FunFam" id="4.10.1060.10:FF:000034">
    <property type="entry name" value="Nucleoporin 153kD, isoform D"/>
    <property type="match status" value="1"/>
</dbReference>
<dbReference type="Gene3D" id="4.10.1060.10">
    <property type="entry name" value="Zinc finger, RanBP2-type"/>
    <property type="match status" value="5"/>
</dbReference>
<dbReference type="InterPro" id="IPR026054">
    <property type="entry name" value="Nucleoporin"/>
</dbReference>
<dbReference type="InterPro" id="IPR001876">
    <property type="entry name" value="Znf_RanBP2"/>
</dbReference>
<dbReference type="InterPro" id="IPR036443">
    <property type="entry name" value="Znf_RanBP2_sf"/>
</dbReference>
<dbReference type="PANTHER" id="PTHR23193">
    <property type="entry name" value="NUCLEAR PORE COMPLEX PROTEIN NUP"/>
    <property type="match status" value="1"/>
</dbReference>
<dbReference type="PANTHER" id="PTHR23193:SF23">
    <property type="entry name" value="NUCLEAR PORE COMPLEX PROTEIN NUP153"/>
    <property type="match status" value="1"/>
</dbReference>
<dbReference type="Pfam" id="PF00641">
    <property type="entry name" value="Zn_ribbon_RanBP"/>
    <property type="match status" value="5"/>
</dbReference>
<dbReference type="SMART" id="SM00547">
    <property type="entry name" value="ZnF_RBZ"/>
    <property type="match status" value="6"/>
</dbReference>
<dbReference type="SUPFAM" id="SSF90209">
    <property type="entry name" value="Ran binding protein zinc finger-like"/>
    <property type="match status" value="6"/>
</dbReference>
<dbReference type="PROSITE" id="PS01358">
    <property type="entry name" value="ZF_RANBP2_1"/>
    <property type="match status" value="6"/>
</dbReference>
<dbReference type="PROSITE" id="PS50199">
    <property type="entry name" value="ZF_RANBP2_2"/>
    <property type="match status" value="6"/>
</dbReference>
<gene>
    <name type="primary">Nup153</name>
    <name type="ORF">CG4453</name>
</gene>
<feature type="chain" id="PRO_0000422142" description="Nuclear pore complex protein Nup153">
    <location>
        <begin position="1"/>
        <end position="1883"/>
    </location>
</feature>
<feature type="repeat" description="1" evidence="12">
    <location>
        <begin position="1287"/>
        <end position="1288"/>
    </location>
</feature>
<feature type="repeat" description="2" evidence="12">
    <location>
        <begin position="1315"/>
        <end position="1316"/>
    </location>
</feature>
<feature type="repeat" description="3" evidence="12">
    <location>
        <begin position="1317"/>
        <end position="1318"/>
    </location>
</feature>
<feature type="repeat" description="4" evidence="12">
    <location>
        <begin position="1340"/>
        <end position="1341"/>
    </location>
</feature>
<feature type="repeat" description="5" evidence="12">
    <location>
        <begin position="1353"/>
        <end position="1354"/>
    </location>
</feature>
<feature type="repeat" description="6" evidence="12">
    <location>
        <begin position="1415"/>
        <end position="1416"/>
    </location>
</feature>
<feature type="repeat" description="7" evidence="12">
    <location>
        <begin position="1469"/>
        <end position="1470"/>
    </location>
</feature>
<feature type="repeat" description="8" evidence="12">
    <location>
        <begin position="1511"/>
        <end position="1512"/>
    </location>
</feature>
<feature type="repeat" description="9" evidence="12">
    <location>
        <begin position="1528"/>
        <end position="1529"/>
    </location>
</feature>
<feature type="repeat" description="10" evidence="12">
    <location>
        <begin position="1548"/>
        <end position="1549"/>
    </location>
</feature>
<feature type="repeat" description="11" evidence="12">
    <location>
        <begin position="1586"/>
        <end position="1587"/>
    </location>
</feature>
<feature type="repeat" description="12" evidence="12">
    <location>
        <begin position="1599"/>
        <end position="1600"/>
    </location>
</feature>
<feature type="repeat" description="13" evidence="12">
    <location>
        <begin position="1613"/>
        <end position="1614"/>
    </location>
</feature>
<feature type="repeat" description="14" evidence="12">
    <location>
        <begin position="1647"/>
        <end position="1648"/>
    </location>
</feature>
<feature type="repeat" description="15" evidence="12">
    <location>
        <begin position="1653"/>
        <end position="1654"/>
    </location>
</feature>
<feature type="repeat" description="16" evidence="12">
    <location>
        <begin position="1672"/>
        <end position="1673"/>
    </location>
</feature>
<feature type="repeat" description="17" evidence="12">
    <location>
        <begin position="1694"/>
        <end position="1695"/>
    </location>
</feature>
<feature type="repeat" description="18" evidence="12">
    <location>
        <begin position="1724"/>
        <end position="1725"/>
    </location>
</feature>
<feature type="repeat" description="19" evidence="12">
    <location>
        <begin position="1737"/>
        <end position="1738"/>
    </location>
</feature>
<feature type="repeat" description="20" evidence="12">
    <location>
        <begin position="1748"/>
        <end position="1749"/>
    </location>
</feature>
<feature type="repeat" description="21" evidence="12">
    <location>
        <begin position="1768"/>
        <end position="1769"/>
    </location>
</feature>
<feature type="repeat" description="22" evidence="12">
    <location>
        <begin position="1785"/>
        <end position="1786"/>
    </location>
</feature>
<feature type="zinc finger region" description="RanBP2-type 1" evidence="2">
    <location>
        <begin position="903"/>
        <end position="932"/>
    </location>
</feature>
<feature type="zinc finger region" description="RanBP2-type 2" evidence="2">
    <location>
        <begin position="962"/>
        <end position="993"/>
    </location>
</feature>
<feature type="zinc finger region" description="RanBP2-type 3" evidence="2">
    <location>
        <begin position="1009"/>
        <end position="1038"/>
    </location>
</feature>
<feature type="zinc finger region" description="RanBP2-type 4" evidence="2">
    <location>
        <begin position="1067"/>
        <end position="1097"/>
    </location>
</feature>
<feature type="zinc finger region" description="RanBP2-type 5" evidence="2">
    <location>
        <begin position="1126"/>
        <end position="1155"/>
    </location>
</feature>
<feature type="zinc finger region" description="RanBP2-type 6" evidence="2">
    <location>
        <begin position="1237"/>
        <end position="1266"/>
    </location>
</feature>
<feature type="region of interest" description="Disordered" evidence="3">
    <location>
        <begin position="1"/>
        <end position="57"/>
    </location>
</feature>
<feature type="region of interest" description="Disordered" evidence="3">
    <location>
        <begin position="70"/>
        <end position="116"/>
    </location>
</feature>
<feature type="region of interest" description="Disordered" evidence="3">
    <location>
        <begin position="176"/>
        <end position="227"/>
    </location>
</feature>
<feature type="region of interest" description="Disordered" evidence="3">
    <location>
        <begin position="400"/>
        <end position="439"/>
    </location>
</feature>
<feature type="region of interest" description="Disordered" evidence="3">
    <location>
        <begin position="498"/>
        <end position="518"/>
    </location>
</feature>
<feature type="region of interest" description="Disordered" evidence="3">
    <location>
        <begin position="580"/>
        <end position="604"/>
    </location>
</feature>
<feature type="region of interest" description="Disordered" evidence="3">
    <location>
        <begin position="627"/>
        <end position="657"/>
    </location>
</feature>
<feature type="region of interest" description="Disordered" evidence="3">
    <location>
        <begin position="694"/>
        <end position="769"/>
    </location>
</feature>
<feature type="region of interest" description="Disordered" evidence="3">
    <location>
        <begin position="791"/>
        <end position="812"/>
    </location>
</feature>
<feature type="region of interest" description="Disordered" evidence="3">
    <location>
        <begin position="1173"/>
        <end position="1197"/>
    </location>
</feature>
<feature type="region of interest" description="22 X 2 AA repeats of F-G" evidence="12">
    <location>
        <begin position="1287"/>
        <end position="1786"/>
    </location>
</feature>
<feature type="region of interest" description="Disordered" evidence="3">
    <location>
        <begin position="1301"/>
        <end position="1331"/>
    </location>
</feature>
<feature type="region of interest" description="Disordered" evidence="3">
    <location>
        <begin position="1449"/>
        <end position="1473"/>
    </location>
</feature>
<feature type="region of interest" description="Disordered" evidence="3">
    <location>
        <begin position="1597"/>
        <end position="1616"/>
    </location>
</feature>
<feature type="region of interest" description="Disordered" evidence="3">
    <location>
        <begin position="1855"/>
        <end position="1883"/>
    </location>
</feature>
<feature type="compositionally biased region" description="Basic and acidic residues" evidence="3">
    <location>
        <begin position="1"/>
        <end position="17"/>
    </location>
</feature>
<feature type="compositionally biased region" description="Acidic residues" evidence="3">
    <location>
        <begin position="29"/>
        <end position="41"/>
    </location>
</feature>
<feature type="compositionally biased region" description="Polar residues" evidence="3">
    <location>
        <begin position="73"/>
        <end position="101"/>
    </location>
</feature>
<feature type="compositionally biased region" description="Basic residues" evidence="3">
    <location>
        <begin position="105"/>
        <end position="115"/>
    </location>
</feature>
<feature type="compositionally biased region" description="Acidic residues" evidence="3">
    <location>
        <begin position="182"/>
        <end position="209"/>
    </location>
</feature>
<feature type="compositionally biased region" description="Basic and acidic residues" evidence="3">
    <location>
        <begin position="420"/>
        <end position="433"/>
    </location>
</feature>
<feature type="compositionally biased region" description="Low complexity" evidence="3">
    <location>
        <begin position="498"/>
        <end position="515"/>
    </location>
</feature>
<feature type="compositionally biased region" description="Polar residues" evidence="3">
    <location>
        <begin position="582"/>
        <end position="591"/>
    </location>
</feature>
<feature type="compositionally biased region" description="Basic and acidic residues" evidence="3">
    <location>
        <begin position="627"/>
        <end position="636"/>
    </location>
</feature>
<feature type="compositionally biased region" description="Polar residues" evidence="3">
    <location>
        <begin position="637"/>
        <end position="657"/>
    </location>
</feature>
<feature type="compositionally biased region" description="Polar residues" evidence="3">
    <location>
        <begin position="694"/>
        <end position="706"/>
    </location>
</feature>
<feature type="compositionally biased region" description="Basic residues" evidence="3">
    <location>
        <begin position="736"/>
        <end position="748"/>
    </location>
</feature>
<feature type="compositionally biased region" description="Low complexity" evidence="3">
    <location>
        <begin position="802"/>
        <end position="812"/>
    </location>
</feature>
<feature type="compositionally biased region" description="Polar residues" evidence="3">
    <location>
        <begin position="1301"/>
        <end position="1323"/>
    </location>
</feature>
<feature type="compositionally biased region" description="Basic residues" evidence="3">
    <location>
        <begin position="1869"/>
        <end position="1883"/>
    </location>
</feature>
<feature type="binding site" evidence="1">
    <location>
        <position position="909"/>
    </location>
    <ligand>
        <name>Zn(2+)</name>
        <dbReference type="ChEBI" id="CHEBI:29105"/>
        <label>1</label>
    </ligand>
</feature>
<feature type="binding site" evidence="1">
    <location>
        <position position="912"/>
    </location>
    <ligand>
        <name>Zn(2+)</name>
        <dbReference type="ChEBI" id="CHEBI:29105"/>
        <label>1</label>
    </ligand>
</feature>
<feature type="binding site" evidence="1">
    <location>
        <position position="923"/>
    </location>
    <ligand>
        <name>Zn(2+)</name>
        <dbReference type="ChEBI" id="CHEBI:29105"/>
        <label>1</label>
    </ligand>
</feature>
<feature type="binding site" evidence="1">
    <location>
        <position position="926"/>
    </location>
    <ligand>
        <name>Zn(2+)</name>
        <dbReference type="ChEBI" id="CHEBI:29105"/>
        <label>1</label>
    </ligand>
</feature>
<feature type="binding site" evidence="1">
    <location>
        <position position="970"/>
    </location>
    <ligand>
        <name>Zn(2+)</name>
        <dbReference type="ChEBI" id="CHEBI:29105"/>
        <label>2</label>
    </ligand>
</feature>
<feature type="binding site" evidence="1">
    <location>
        <position position="973"/>
    </location>
    <ligand>
        <name>Zn(2+)</name>
        <dbReference type="ChEBI" id="CHEBI:29105"/>
        <label>2</label>
    </ligand>
</feature>
<feature type="binding site" evidence="1">
    <location>
        <position position="984"/>
    </location>
    <ligand>
        <name>Zn(2+)</name>
        <dbReference type="ChEBI" id="CHEBI:29105"/>
        <label>2</label>
    </ligand>
</feature>
<feature type="binding site" evidence="1">
    <location>
        <position position="987"/>
    </location>
    <ligand>
        <name>Zn(2+)</name>
        <dbReference type="ChEBI" id="CHEBI:29105"/>
        <label>2</label>
    </ligand>
</feature>
<feature type="binding site" evidence="1">
    <location>
        <position position="1015"/>
    </location>
    <ligand>
        <name>Zn(2+)</name>
        <dbReference type="ChEBI" id="CHEBI:29105"/>
        <label>3</label>
    </ligand>
</feature>
<feature type="binding site" evidence="1">
    <location>
        <position position="1018"/>
    </location>
    <ligand>
        <name>Zn(2+)</name>
        <dbReference type="ChEBI" id="CHEBI:29105"/>
        <label>3</label>
    </ligand>
</feature>
<feature type="binding site" evidence="1">
    <location>
        <position position="1029"/>
    </location>
    <ligand>
        <name>Zn(2+)</name>
        <dbReference type="ChEBI" id="CHEBI:29105"/>
        <label>3</label>
    </ligand>
</feature>
<feature type="binding site" evidence="1">
    <location>
        <position position="1032"/>
    </location>
    <ligand>
        <name>Zn(2+)</name>
        <dbReference type="ChEBI" id="CHEBI:29105"/>
        <label>3</label>
    </ligand>
</feature>
<feature type="binding site" evidence="1">
    <location>
        <position position="1074"/>
    </location>
    <ligand>
        <name>Zn(2+)</name>
        <dbReference type="ChEBI" id="CHEBI:29105"/>
        <label>4</label>
    </ligand>
</feature>
<feature type="binding site" evidence="1">
    <location>
        <position position="1077"/>
    </location>
    <ligand>
        <name>Zn(2+)</name>
        <dbReference type="ChEBI" id="CHEBI:29105"/>
        <label>4</label>
    </ligand>
</feature>
<feature type="binding site" evidence="1">
    <location>
        <position position="1088"/>
    </location>
    <ligand>
        <name>Zn(2+)</name>
        <dbReference type="ChEBI" id="CHEBI:29105"/>
        <label>4</label>
    </ligand>
</feature>
<feature type="binding site" evidence="1">
    <location>
        <position position="1091"/>
    </location>
    <ligand>
        <name>Zn(2+)</name>
        <dbReference type="ChEBI" id="CHEBI:29105"/>
        <label>4</label>
    </ligand>
</feature>
<organism>
    <name type="scientific">Drosophila melanogaster</name>
    <name type="common">Fruit fly</name>
    <dbReference type="NCBI Taxonomy" id="7227"/>
    <lineage>
        <taxon>Eukaryota</taxon>
        <taxon>Metazoa</taxon>
        <taxon>Ecdysozoa</taxon>
        <taxon>Arthropoda</taxon>
        <taxon>Hexapoda</taxon>
        <taxon>Insecta</taxon>
        <taxon>Pterygota</taxon>
        <taxon>Neoptera</taxon>
        <taxon>Endopterygota</taxon>
        <taxon>Diptera</taxon>
        <taxon>Brachycera</taxon>
        <taxon>Muscomorpha</taxon>
        <taxon>Ephydroidea</taxon>
        <taxon>Drosophilidae</taxon>
        <taxon>Drosophila</taxon>
        <taxon>Sophophora</taxon>
    </lineage>
</organism>
<comment type="function">
    <text evidence="4 5 7 8 9">Component of the nuclear pore complex (NPC), a complex required for the trafficking across the nuclear envelope (PubMed:17682050). Functions as a scaffolding element in the nuclear phase of the NPC (PubMed:17682050). Essential for the nuclear import of nuclear localization signal (NLS)-containing proteins in a Importin alpha/Importin beta receptor-dependent manner (PubMed:17682050). Required for nuclear import of Mad (PubMed:20547758). Plays a role in chromosomal organization and gene expression regulation; stimulates transcription by promoting the formation of an open chromatin environment (PubMed:20174442). Binds chromatin to nucleoporin-associated regions (NARs) that define transcriptionally active regions of the genome (PubMed:20174442). Associates with extended chromosomal regions that alternate between domains of high density binding with those of low occupancy (PubMed:20174442). Preferentially binds to NARs of the male X chromosome (PubMed:20174442). In males, together with Mgtor, required for the localization of the male-specific lethal (MSL) histone acetyltransferase complex to the X chromosome and therefore for the transcription of dosage compensation genes (PubMed:16543150). May play a role in double strand break DNA repair (PubMed:26502056).</text>
</comment>
<comment type="cofactor">
    <cofactor>
        <name>Zn(2+)</name>
        <dbReference type="ChEBI" id="CHEBI:29105"/>
    </cofactor>
    <text>Binds at least 4 zinc ions per subunit.</text>
</comment>
<comment type="subunit">
    <text evidence="4 5">Part of the nuclear pore complex (NPC) (PubMed:17682050). Associates with male-specific lethal (MSL) histone acetyltransferase complex (PubMed:16543150).</text>
</comment>
<comment type="subcellular location">
    <subcellularLocation>
        <location evidence="5">Nucleus</location>
    </subcellularLocation>
    <subcellularLocation>
        <location evidence="4 5 6">Nucleus membrane</location>
    </subcellularLocation>
    <subcellularLocation>
        <location evidence="5 10">Nucleus</location>
        <location evidence="5 10">Nuclear pore complex</location>
    </subcellularLocation>
    <subcellularLocation>
        <location evidence="7">Chromosome</location>
    </subcellularLocation>
    <subcellularLocation>
        <location evidence="6">Cytoplasm</location>
        <location evidence="6">Cytoskeleton</location>
        <location evidence="6">Spindle</location>
    </subcellularLocation>
    <text evidence="6 7 11">Localized to the nucleoplasmic side of the nuclear pore complex (NPC) core structure, forming a fibrous structure called the nuclear basket (PubMed:17682050). Localized at the spindle in mitotic syncytial embryos (PubMed:18562695). Associates with chromatin (PubMed:20174442).</text>
</comment>
<comment type="tissue specificity">
    <text evidence="10">Expressed in adult male accessory glands (at protein level).</text>
</comment>
<comment type="developmental stage">
    <text evidence="6">Expressed in syncytial embryos.</text>
</comment>
<comment type="domain">
    <text evidence="12">Contains FG repeats. FG repeats are interaction sites for karyopherins (importins, exportins) and form probably an affinity gradient, guiding the transport proteins unidirectionally with their cargo through the NPC. FG repeat regions are highly flexible and lack ordered secondary structure. The overall conservation of FG repeats regarding exact sequence, spacing, and repeat unit length is limited.</text>
</comment>
<comment type="similarity">
    <text evidence="12">Belongs to the NUP153 family.</text>
</comment>
<name>NU153_DROME</name>
<sequence length="1883" mass="196585">MEDAQEQRESSQAELAKKHPLTPLKELPEESEEEEEEEDESSAGALRESDSNNSIMGKMKMRVSSILPASLSGWFSPSSKDGNDALSSPANLRQSQPRQSNGRLTTKRKRGRRRIMLAEVDADAADDLDDGSDAKGLNYEEVALADNIAEHDLAAEDEQTRRSEYNVFLLRKRAGAVAAAGGDEDEAEEDELEEDDEDGDEEDDDEEQENLQQSAAVQTKRRRLELETPVNLPNMRRLPLLSSTPAAPLAAATSSSSSQMYKGVSHIAPHRRNHLNLYGSQRQREPAYNFFTGNEAAEGSTGDLPHSIRRSLNIPFGGSSTATSYNNSLSSLPNHKRPSLIGKQTHRRDLTMDETGTGPAMSSEEHLNHLLRISRTNNNTSNNNNNNNNNNNVIETKTRRSELSAAAGGCGDSQSESDMNEYHDNGEGHDGLRPSHYNSNSNLEFYGNLQSSKSIFNRSNTAAQQSHRNSTWSLNSLTQRRRFNASIYGSTSALSDSRLLSGSASNSGSASASSSPFYQGRTTFGGNSGNNRLFSRSNLSSSAASSMLGLNSAGSSPAHQLHASMTGGIGYGMKAVDMRPSDSGSLAETSVGQGGSKKPGTGLSNTTMRILNLLESYSTPLIDAKRMGSSIKEHQSSRQQRQGTPATPYLRSTSASRNVSVPNHINELAELRSNKLLVPTMQQLLERRRLHRVTQNSRDVVHSQNVRAGGENNQEKPKPTAPYVAPIDQSANHTQHTNKMRSRLSHQTRNKETRTAEEEAPPPLDLPQISFPDMASAPKFDLIIKPTVPVVSKPSTTDPIQSSKSSNTNLSTTNSKQMPNFLANPQPAAPIVNFAANGNVSAISKPSKRTFTFSEPTPLSNFQENCIPKPKINRKYTFSAPAPLDDLRITNKQSQPTINGTPSSKEWECDTCMVRNKPEINKCVACETAKPVASAAPVQAPLPPSTAAIDTQSFVGFGDRFKKSTTAWECDACMLSNKAEASKCIACETPRKTVAPKVNNFSPLITNAKSNEWECSVCLVRNKVEVSKCVACESAKPGATMALPATSNIAVATPSIITDGFGDRFKKSATAWECDACMLSNKAEASKCIACETPRKSSTPIANSSYPSINNNLPAGSGFDISFTRKANMWECQTCLVMNKSSDEECIACQTPNSQARNSNSESALISSISSSSASFSGSLSRPSSRSSSGSTSTCGSVCSGSIVSISSTTESAKALSAKKVPPKPDAGFQQLVAAQKTSTWECEACLAKNDMSRKTCICCEQMMPEAFNPAATTANSAASSVPKFRFGFSHVKEVVKPSVETTTTPAPTSAQFSFGFGQSNQGKDVADSKKTEAPKTFMFGVSKVEEPKTVSFGTGIKETTATSSTEATAPTPAAAAPAPVQFVFKAPTTATTASSLTTTISTTSNAPALGGFSFGAPSSSSTVSSSTTSTSANPAAVKPMFSWSGAGSAVSSTSSSQQPVAKAPTLGFGVSSSTVTTTTTSTKVFAFTPASGLDPAAATSAPAAGAGFSFGSQSKPATTQNTGTFFFGQPTAVAPATPTNPSVSSIFGAPATSTTASTSVSATTSTSTANAIASSFAPTSTPQLFGNWGEKKTDLTTFGASSGSGTTTTPSFGWSSNGDAAKSNSAAVGSAAVPSSSASTMATPIFGSSSMFGPSSSSNNTTSTSTTSLPFGSAATTAATTPAGGNAALTGLFGNVGNSLAGVGAPVATTPAATAAAPLTNIFGNPTPVAAAAPVFGSGSTIPSAGFGAPAAAAPLAAPALPGAFNFGGATAATPAASSAPFVFGSSTNEPLAKPSFNFTGSAASSTAPAPAFNFTANTAATNNPSGGDSTPNANALFQFSATSTAPANIFAFNPPAAGNSAQSSQTARRKIRAPVRRLPPR</sequence>
<evidence type="ECO:0000250" key="1">
    <source>
        <dbReference type="UniProtKB" id="P49791"/>
    </source>
</evidence>
<evidence type="ECO:0000255" key="2">
    <source>
        <dbReference type="PROSITE-ProRule" id="PRU00322"/>
    </source>
</evidence>
<evidence type="ECO:0000256" key="3">
    <source>
        <dbReference type="SAM" id="MobiDB-lite"/>
    </source>
</evidence>
<evidence type="ECO:0000269" key="4">
    <source>
    </source>
</evidence>
<evidence type="ECO:0000269" key="5">
    <source>
    </source>
</evidence>
<evidence type="ECO:0000269" key="6">
    <source>
    </source>
</evidence>
<evidence type="ECO:0000269" key="7">
    <source>
    </source>
</evidence>
<evidence type="ECO:0000269" key="8">
    <source>
    </source>
</evidence>
<evidence type="ECO:0000269" key="9">
    <source>
    </source>
</evidence>
<evidence type="ECO:0000269" key="10">
    <source>
    </source>
</evidence>
<evidence type="ECO:0000303" key="11">
    <source>
    </source>
</evidence>
<evidence type="ECO:0000305" key="12"/>
<protein>
    <recommendedName>
        <fullName>Nuclear pore complex protein Nup153</fullName>
    </recommendedName>
    <alternativeName>
        <fullName>153 kDa nucleoporin</fullName>
    </alternativeName>
    <alternativeName>
        <fullName>Nucleoporin Nup153</fullName>
    </alternativeName>
</protein>